<reference key="1">
    <citation type="journal article" date="2007" name="J. Bacteriol.">
        <title>The complete genome sequence of Roseobacter denitrificans reveals a mixotrophic rather than photosynthetic metabolism.</title>
        <authorList>
            <person name="Swingley W.D."/>
            <person name="Sadekar S."/>
            <person name="Mastrian S.D."/>
            <person name="Matthies H.J."/>
            <person name="Hao J."/>
            <person name="Ramos H."/>
            <person name="Acharya C.R."/>
            <person name="Conrad A.L."/>
            <person name="Taylor H.L."/>
            <person name="Dejesa L.C."/>
            <person name="Shah M.K."/>
            <person name="O'Huallachain M.E."/>
            <person name="Lince M.T."/>
            <person name="Blankenship R.E."/>
            <person name="Beatty J.T."/>
            <person name="Touchman J.W."/>
        </authorList>
    </citation>
    <scope>NUCLEOTIDE SEQUENCE [LARGE SCALE GENOMIC DNA]</scope>
    <source>
        <strain>ATCC 33942 / OCh 114</strain>
    </source>
</reference>
<protein>
    <recommendedName>
        <fullName>Bifunctional ribose 1,5-bisphosphokinase-thymidine phosphorylase</fullName>
    </recommendedName>
    <domain>
        <recommendedName>
            <fullName>Ribose 1,5-bisphosphate phosphokinase PhnN</fullName>
            <ecNumber>2.7.4.23</ecNumber>
        </recommendedName>
        <alternativeName>
            <fullName>Ribose 1,5-bisphosphokinase</fullName>
        </alternativeName>
    </domain>
    <domain>
        <recommendedName>
            <fullName>Putative thymidine phosphorylase</fullName>
            <ecNumber>2.4.2.4</ecNumber>
        </recommendedName>
        <alternativeName>
            <fullName>TdRPase</fullName>
        </alternativeName>
    </domain>
</protein>
<keyword id="KW-0019">Alkylphosphonate uptake</keyword>
<keyword id="KW-0067">ATP-binding</keyword>
<keyword id="KW-0328">Glycosyltransferase</keyword>
<keyword id="KW-0511">Multifunctional enzyme</keyword>
<keyword id="KW-0547">Nucleotide-binding</keyword>
<keyword id="KW-1185">Reference proteome</keyword>
<keyword id="KW-0808">Transferase</keyword>
<comment type="function">
    <text evidence="1">Catalyzes the phosphorylation of ribose 1,5-bisphosphate to 5-phospho-D-ribosyl alpha-1-diphosphate (PRPP).</text>
</comment>
<comment type="catalytic activity">
    <reaction>
        <text>alpha-D-ribose 1,5-bisphosphate + ATP = 5-phospho-alpha-D-ribose 1-diphosphate + ADP</text>
        <dbReference type="Rhea" id="RHEA:20109"/>
        <dbReference type="ChEBI" id="CHEBI:30616"/>
        <dbReference type="ChEBI" id="CHEBI:58017"/>
        <dbReference type="ChEBI" id="CHEBI:68688"/>
        <dbReference type="ChEBI" id="CHEBI:456216"/>
        <dbReference type="EC" id="2.7.4.23"/>
    </reaction>
</comment>
<comment type="catalytic activity">
    <reaction>
        <text>thymidine + phosphate = 2-deoxy-alpha-D-ribose 1-phosphate + thymine</text>
        <dbReference type="Rhea" id="RHEA:16037"/>
        <dbReference type="ChEBI" id="CHEBI:17748"/>
        <dbReference type="ChEBI" id="CHEBI:17821"/>
        <dbReference type="ChEBI" id="CHEBI:43474"/>
        <dbReference type="ChEBI" id="CHEBI:57259"/>
        <dbReference type="EC" id="2.4.2.4"/>
    </reaction>
</comment>
<comment type="pathway">
    <text>Metabolic intermediate biosynthesis; 5-phospho-alpha-D-ribose 1-diphosphate biosynthesis; 5-phospho-alpha-D-ribose 1-diphosphate from D-ribose 5-phosphate (route II): step 3/3.</text>
</comment>
<comment type="similarity">
    <text evidence="2">In the N-terminal section; belongs to the ribose 1,5-bisphosphokinase family.</text>
</comment>
<comment type="similarity">
    <text evidence="2">In the C-terminal section; belongs to the thymidine/pyrimidine-nucleoside phosphorylase family. Type 2 subfamily.</text>
</comment>
<name>RBKTP_ROSDO</name>
<dbReference type="EC" id="2.7.4.23"/>
<dbReference type="EC" id="2.4.2.4"/>
<dbReference type="EMBL" id="CP000362">
    <property type="protein sequence ID" value="ABG31161.1"/>
    <property type="molecule type" value="Genomic_DNA"/>
</dbReference>
<dbReference type="RefSeq" id="WP_011567781.1">
    <property type="nucleotide sequence ID" value="NC_008209.1"/>
</dbReference>
<dbReference type="SMR" id="Q16A32"/>
<dbReference type="STRING" id="375451.RD1_1528"/>
<dbReference type="KEGG" id="rde:RD1_1528"/>
<dbReference type="eggNOG" id="COG0213">
    <property type="taxonomic scope" value="Bacteria"/>
</dbReference>
<dbReference type="eggNOG" id="COG3709">
    <property type="taxonomic scope" value="Bacteria"/>
</dbReference>
<dbReference type="HOGENOM" id="CLU_025040_6_0_5"/>
<dbReference type="OrthoDB" id="341217at2"/>
<dbReference type="UniPathway" id="UPA00087">
    <property type="reaction ID" value="UER00175"/>
</dbReference>
<dbReference type="Proteomes" id="UP000007029">
    <property type="component" value="Chromosome"/>
</dbReference>
<dbReference type="GO" id="GO:0005829">
    <property type="term" value="C:cytosol"/>
    <property type="evidence" value="ECO:0007669"/>
    <property type="project" value="TreeGrafter"/>
</dbReference>
<dbReference type="GO" id="GO:0004645">
    <property type="term" value="F:1,4-alpha-oligoglucan phosphorylase activity"/>
    <property type="evidence" value="ECO:0007669"/>
    <property type="project" value="InterPro"/>
</dbReference>
<dbReference type="GO" id="GO:0005524">
    <property type="term" value="F:ATP binding"/>
    <property type="evidence" value="ECO:0007669"/>
    <property type="project" value="UniProtKB-KW"/>
</dbReference>
<dbReference type="GO" id="GO:0033863">
    <property type="term" value="F:ribose 1,5-bisphosphate phosphokinase activity"/>
    <property type="evidence" value="ECO:0007669"/>
    <property type="project" value="UniProtKB-UniRule"/>
</dbReference>
<dbReference type="GO" id="GO:0009032">
    <property type="term" value="F:thymidine phosphorylase activity"/>
    <property type="evidence" value="ECO:0007669"/>
    <property type="project" value="UniProtKB-UniRule"/>
</dbReference>
<dbReference type="GO" id="GO:0006015">
    <property type="term" value="P:5-phosphoribose 1-diphosphate biosynthetic process"/>
    <property type="evidence" value="ECO:0007669"/>
    <property type="project" value="UniProtKB-UniRule"/>
</dbReference>
<dbReference type="GO" id="GO:0019634">
    <property type="term" value="P:organic phosphonate metabolic process"/>
    <property type="evidence" value="ECO:0007669"/>
    <property type="project" value="UniProtKB-UniRule"/>
</dbReference>
<dbReference type="GO" id="GO:0015716">
    <property type="term" value="P:organic phosphonate transport"/>
    <property type="evidence" value="ECO:0007669"/>
    <property type="project" value="UniProtKB-KW"/>
</dbReference>
<dbReference type="GO" id="GO:0006206">
    <property type="term" value="P:pyrimidine nucleobase metabolic process"/>
    <property type="evidence" value="ECO:0007669"/>
    <property type="project" value="InterPro"/>
</dbReference>
<dbReference type="GO" id="GO:0006213">
    <property type="term" value="P:pyrimidine nucleoside metabolic process"/>
    <property type="evidence" value="ECO:0007669"/>
    <property type="project" value="InterPro"/>
</dbReference>
<dbReference type="Gene3D" id="1.20.970.50">
    <property type="match status" value="1"/>
</dbReference>
<dbReference type="Gene3D" id="3.40.1030.10">
    <property type="entry name" value="Nucleoside phosphorylase/phosphoribosyltransferase catalytic domain"/>
    <property type="match status" value="1"/>
</dbReference>
<dbReference type="Gene3D" id="3.40.50.300">
    <property type="entry name" value="P-loop containing nucleotide triphosphate hydrolases"/>
    <property type="match status" value="1"/>
</dbReference>
<dbReference type="Gene3D" id="3.90.1170.30">
    <property type="entry name" value="Pyrimidine nucleoside phosphorylase-like, C-terminal domain"/>
    <property type="match status" value="1"/>
</dbReference>
<dbReference type="HAMAP" id="MF_00836">
    <property type="entry name" value="PhnN"/>
    <property type="match status" value="1"/>
</dbReference>
<dbReference type="HAMAP" id="MF_00703">
    <property type="entry name" value="Thymid_phosp_2"/>
    <property type="match status" value="1"/>
</dbReference>
<dbReference type="InterPro" id="IPR008145">
    <property type="entry name" value="GK/Ca_channel_bsu"/>
</dbReference>
<dbReference type="InterPro" id="IPR000312">
    <property type="entry name" value="Glycosyl_Trfase_fam3"/>
</dbReference>
<dbReference type="InterPro" id="IPR017459">
    <property type="entry name" value="Glycosyl_Trfase_fam3_N_dom"/>
</dbReference>
<dbReference type="InterPro" id="IPR036320">
    <property type="entry name" value="Glycosyl_Trfase_fam3_N_dom_sf"/>
</dbReference>
<dbReference type="InterPro" id="IPR008144">
    <property type="entry name" value="Guanylate_kin-like_dom"/>
</dbReference>
<dbReference type="InterPro" id="IPR035902">
    <property type="entry name" value="Nuc_phospho_transferase"/>
</dbReference>
<dbReference type="InterPro" id="IPR027417">
    <property type="entry name" value="P-loop_NTPase"/>
</dbReference>
<dbReference type="InterPro" id="IPR012699">
    <property type="entry name" value="PhnN"/>
</dbReference>
<dbReference type="InterPro" id="IPR036566">
    <property type="entry name" value="PYNP-like_C_sf"/>
</dbReference>
<dbReference type="InterPro" id="IPR013102">
    <property type="entry name" value="PYNP_C"/>
</dbReference>
<dbReference type="InterPro" id="IPR017872">
    <property type="entry name" value="Pyrmidine_PPase_CS"/>
</dbReference>
<dbReference type="InterPro" id="IPR028579">
    <property type="entry name" value="Thym_Pase_Put"/>
</dbReference>
<dbReference type="InterPro" id="IPR013466">
    <property type="entry name" value="Thymidine/AMP_Pase"/>
</dbReference>
<dbReference type="InterPro" id="IPR000053">
    <property type="entry name" value="Thymidine/pyrmidine_PPase"/>
</dbReference>
<dbReference type="NCBIfam" id="TIGR02645">
    <property type="entry name" value="ARCH_P_rylase"/>
    <property type="match status" value="1"/>
</dbReference>
<dbReference type="NCBIfam" id="TIGR02322">
    <property type="entry name" value="phosphon_PhnN"/>
    <property type="match status" value="1"/>
</dbReference>
<dbReference type="NCBIfam" id="NF003338">
    <property type="entry name" value="PRK04350.1"/>
    <property type="match status" value="1"/>
</dbReference>
<dbReference type="PANTHER" id="PTHR10515">
    <property type="entry name" value="THYMIDINE PHOSPHORYLASE"/>
    <property type="match status" value="1"/>
</dbReference>
<dbReference type="PANTHER" id="PTHR10515:SF0">
    <property type="entry name" value="THYMIDINE PHOSPHORYLASE"/>
    <property type="match status" value="1"/>
</dbReference>
<dbReference type="Pfam" id="PF02885">
    <property type="entry name" value="Glycos_trans_3N"/>
    <property type="match status" value="1"/>
</dbReference>
<dbReference type="Pfam" id="PF00591">
    <property type="entry name" value="Glycos_transf_3"/>
    <property type="match status" value="1"/>
</dbReference>
<dbReference type="Pfam" id="PF00625">
    <property type="entry name" value="Guanylate_kin"/>
    <property type="match status" value="1"/>
</dbReference>
<dbReference type="Pfam" id="PF07831">
    <property type="entry name" value="PYNP_C"/>
    <property type="match status" value="1"/>
</dbReference>
<dbReference type="SMART" id="SM00072">
    <property type="entry name" value="GuKc"/>
    <property type="match status" value="1"/>
</dbReference>
<dbReference type="SMART" id="SM00941">
    <property type="entry name" value="PYNP_C"/>
    <property type="match status" value="1"/>
</dbReference>
<dbReference type="SUPFAM" id="SSF52418">
    <property type="entry name" value="Nucleoside phosphorylase/phosphoribosyltransferase catalytic domain"/>
    <property type="match status" value="1"/>
</dbReference>
<dbReference type="SUPFAM" id="SSF47648">
    <property type="entry name" value="Nucleoside phosphorylase/phosphoribosyltransferase N-terminal domain"/>
    <property type="match status" value="1"/>
</dbReference>
<dbReference type="SUPFAM" id="SSF52540">
    <property type="entry name" value="P-loop containing nucleoside triphosphate hydrolases"/>
    <property type="match status" value="1"/>
</dbReference>
<dbReference type="SUPFAM" id="SSF54680">
    <property type="entry name" value="Pyrimidine nucleoside phosphorylase C-terminal domain"/>
    <property type="match status" value="1"/>
</dbReference>
<dbReference type="PROSITE" id="PS50052">
    <property type="entry name" value="GUANYLATE_KINASE_2"/>
    <property type="match status" value="1"/>
</dbReference>
<dbReference type="PROSITE" id="PS00647">
    <property type="entry name" value="THYMID_PHOSPHORYLASE"/>
    <property type="match status" value="1"/>
</dbReference>
<proteinExistence type="inferred from homology"/>
<feature type="chain" id="PRO_0000314717" description="Bifunctional ribose 1,5-bisphosphokinase-thymidine phosphorylase">
    <location>
        <begin position="1"/>
        <end position="677"/>
    </location>
</feature>
<feature type="region of interest" description="Ribose 1,5-bisphosphokinase">
    <location>
        <begin position="1"/>
        <end position="187"/>
    </location>
</feature>
<feature type="region of interest" description="Thymidinephosphorylase">
    <location>
        <begin position="188"/>
        <end position="677"/>
    </location>
</feature>
<sequence>MPGTLFLIVGPSGVGKDTLLEGARDRLATSRWFSFPQRVVTRAADAGGEDYIPVTPSEFEQQLAAGAFWHQWHAHGLSYGIPMQVARDLDNGINVVLNASRNEIGAFRDKATHVVTIGISAPPGIVEERLHERGRESEEEIKRRLARLVEQAPLTGYALEIVNDRTIEEGITALVDLIAGACDLNAEITRFPVTIGSKQVCLVHKGNQIASRVLAGSSRVTLSLRGKSVSAELGETWSDEIVSQDLCALSEGAMAALDAVEGDVVSIERSPTPKSRSILQKKVRGGELSHAEMEAFIHDLVNGRFSTSEIAGFLVAASNNLTMDEVISLTQVRAAFAHRHDWGKAIVVDKHSMGGVPGNRITPIIIPILAAFGLTVPKTSSRAITSAAGTADMMEVLSRVDLSPDEMKSVVEQTNGCIAWNGNLTHSPVDDVMNAINRPLGLQSTLLDVSSIMSKKLAAGSTHVLIDMPVGPKAKTRTQGEAGALKNLFESVGQGIGLNTKVQISDGTKPIGRGVGPVLEALDVLSVLRGEAGAPTDLLDKSIGYAATILEWSGAVSQGQGAQVTRDLVSSGKAFEKLFEIRDAQGRQHDPLQPGQFTEDICADRSGRVEAIDIQGISEVARLSGAPKDKAAGVVLNVQVGDQIAEKQPLLRVHSSSLRGIEEAVCAAQAQSAFKIL</sequence>
<evidence type="ECO:0000250" key="1"/>
<evidence type="ECO:0000305" key="2"/>
<organism>
    <name type="scientific">Roseobacter denitrificans (strain ATCC 33942 / OCh 114)</name>
    <name type="common">Erythrobacter sp. (strain OCh 114)</name>
    <name type="synonym">Roseobacter denitrificans</name>
    <dbReference type="NCBI Taxonomy" id="375451"/>
    <lineage>
        <taxon>Bacteria</taxon>
        <taxon>Pseudomonadati</taxon>
        <taxon>Pseudomonadota</taxon>
        <taxon>Alphaproteobacteria</taxon>
        <taxon>Rhodobacterales</taxon>
        <taxon>Roseobacteraceae</taxon>
        <taxon>Roseobacter</taxon>
    </lineage>
</organism>
<gene>
    <name type="primary">phnN</name>
    <name type="ordered locus">RD1_1528</name>
</gene>
<accession>Q16A32</accession>